<dbReference type="EMBL" id="AF333983">
    <property type="protein sequence ID" value="AAK20835.1"/>
    <property type="molecule type" value="mRNA"/>
</dbReference>
<dbReference type="EMBL" id="X60469">
    <property type="protein sequence ID" value="CAA42999.1"/>
    <property type="status" value="ALT_FRAME"/>
    <property type="molecule type" value="mRNA"/>
</dbReference>
<dbReference type="EMBL" id="X60468">
    <property type="protein sequence ID" value="CAA42998.1"/>
    <property type="molecule type" value="mRNA"/>
</dbReference>
<dbReference type="PIR" id="S22571">
    <property type="entry name" value="S22571"/>
</dbReference>
<dbReference type="PIR" id="S50818">
    <property type="entry name" value="S50818"/>
</dbReference>
<dbReference type="RefSeq" id="NP_536726.1">
    <molecule id="P46933-1"/>
    <property type="nucleotide sequence ID" value="NM_080478.2"/>
</dbReference>
<dbReference type="RefSeq" id="XP_006229998.1">
    <property type="nucleotide sequence ID" value="XM_006229936.3"/>
</dbReference>
<dbReference type="RefSeq" id="XP_063143988.1">
    <molecule id="P46933-2"/>
    <property type="nucleotide sequence ID" value="XM_063287918.1"/>
</dbReference>
<dbReference type="RefSeq" id="XP_063143989.1">
    <molecule id="P46933-2"/>
    <property type="nucleotide sequence ID" value="XM_063287919.1"/>
</dbReference>
<dbReference type="BMRB" id="P46933"/>
<dbReference type="SMR" id="P46933"/>
<dbReference type="BioGRID" id="248339">
    <property type="interactions" value="6"/>
</dbReference>
<dbReference type="DIP" id="DIP-682N"/>
<dbReference type="ELM" id="P46933"/>
<dbReference type="FunCoup" id="P46933">
    <property type="interactions" value="1724"/>
</dbReference>
<dbReference type="IntAct" id="P46933">
    <property type="interactions" value="5"/>
</dbReference>
<dbReference type="MINT" id="P46933"/>
<dbReference type="STRING" id="10116.ENSRNOP00000024402"/>
<dbReference type="iPTMnet" id="P46933"/>
<dbReference type="PhosphoSitePlus" id="P46933"/>
<dbReference type="PaxDb" id="10116-ENSRNOP00000024402"/>
<dbReference type="GeneID" id="29722"/>
<dbReference type="KEGG" id="rno:29722"/>
<dbReference type="UCSC" id="RGD:2122">
    <molecule id="P46933-1"/>
    <property type="organism name" value="rat"/>
</dbReference>
<dbReference type="AGR" id="RGD:2122"/>
<dbReference type="CTD" id="322"/>
<dbReference type="RGD" id="2122">
    <property type="gene designation" value="Apbb1"/>
</dbReference>
<dbReference type="VEuPathDB" id="HostDB:ENSRNOG00000018020"/>
<dbReference type="eggNOG" id="ENOG502QT08">
    <property type="taxonomic scope" value="Eukaryota"/>
</dbReference>
<dbReference type="InParanoid" id="P46933"/>
<dbReference type="OrthoDB" id="5969782at2759"/>
<dbReference type="PhylomeDB" id="P46933"/>
<dbReference type="Reactome" id="R-RNO-5693565">
    <property type="pathway name" value="Recruitment and ATM-mediated phosphorylation of repair and signaling proteins at DNA double strand breaks"/>
</dbReference>
<dbReference type="PRO" id="PR:P46933"/>
<dbReference type="Proteomes" id="UP000002494">
    <property type="component" value="Chromosome 1"/>
</dbReference>
<dbReference type="Bgee" id="ENSRNOG00000018020">
    <property type="expression patterns" value="Expressed in frontal cortex and 19 other cell types or tissues"/>
</dbReference>
<dbReference type="ExpressionAtlas" id="P46933">
    <property type="expression patterns" value="baseline and differential"/>
</dbReference>
<dbReference type="GO" id="GO:0005737">
    <property type="term" value="C:cytoplasm"/>
    <property type="evidence" value="ECO:0000314"/>
    <property type="project" value="UniProtKB"/>
</dbReference>
<dbReference type="GO" id="GO:0043197">
    <property type="term" value="C:dendritic spine"/>
    <property type="evidence" value="ECO:0000314"/>
    <property type="project" value="RGD"/>
</dbReference>
<dbReference type="GO" id="GO:0098978">
    <property type="term" value="C:glutamatergic synapse"/>
    <property type="evidence" value="ECO:0000266"/>
    <property type="project" value="RGD"/>
</dbReference>
<dbReference type="GO" id="GO:0030426">
    <property type="term" value="C:growth cone"/>
    <property type="evidence" value="ECO:0000314"/>
    <property type="project" value="UniProtKB"/>
</dbReference>
<dbReference type="GO" id="GO:1990812">
    <property type="term" value="C:growth cone filopodium"/>
    <property type="evidence" value="ECO:0000314"/>
    <property type="project" value="RGD"/>
</dbReference>
<dbReference type="GO" id="GO:1990761">
    <property type="term" value="C:growth cone lamellipodium"/>
    <property type="evidence" value="ECO:0000314"/>
    <property type="project" value="RGD"/>
</dbReference>
<dbReference type="GO" id="GO:0030027">
    <property type="term" value="C:lamellipodium"/>
    <property type="evidence" value="ECO:0000250"/>
    <property type="project" value="UniProtKB"/>
</dbReference>
<dbReference type="GO" id="GO:0044304">
    <property type="term" value="C:main axon"/>
    <property type="evidence" value="ECO:0000314"/>
    <property type="project" value="RGD"/>
</dbReference>
<dbReference type="GO" id="GO:0031594">
    <property type="term" value="C:neuromuscular junction"/>
    <property type="evidence" value="ECO:0000266"/>
    <property type="project" value="RGD"/>
</dbReference>
<dbReference type="GO" id="GO:0043025">
    <property type="term" value="C:neuronal cell body"/>
    <property type="evidence" value="ECO:0000314"/>
    <property type="project" value="RGD"/>
</dbReference>
<dbReference type="GO" id="GO:0016607">
    <property type="term" value="C:nuclear speck"/>
    <property type="evidence" value="ECO:0007669"/>
    <property type="project" value="UniProtKB-SubCell"/>
</dbReference>
<dbReference type="GO" id="GO:0005634">
    <property type="term" value="C:nucleus"/>
    <property type="evidence" value="ECO:0000314"/>
    <property type="project" value="UniProtKB"/>
</dbReference>
<dbReference type="GO" id="GO:0048471">
    <property type="term" value="C:perinuclear region of cytoplasm"/>
    <property type="evidence" value="ECO:0000314"/>
    <property type="project" value="RGD"/>
</dbReference>
<dbReference type="GO" id="GO:0005886">
    <property type="term" value="C:plasma membrane"/>
    <property type="evidence" value="ECO:0000266"/>
    <property type="project" value="RGD"/>
</dbReference>
<dbReference type="GO" id="GO:0014069">
    <property type="term" value="C:postsynaptic density"/>
    <property type="evidence" value="ECO:0000314"/>
    <property type="project" value="SynGO"/>
</dbReference>
<dbReference type="GO" id="GO:0045211">
    <property type="term" value="C:postsynaptic membrane"/>
    <property type="evidence" value="ECO:0000314"/>
    <property type="project" value="RGD"/>
</dbReference>
<dbReference type="GO" id="GO:0098793">
    <property type="term" value="C:presynapse"/>
    <property type="evidence" value="ECO:0000314"/>
    <property type="project" value="SynGO"/>
</dbReference>
<dbReference type="GO" id="GO:0042734">
    <property type="term" value="C:presynaptic membrane"/>
    <property type="evidence" value="ECO:0000314"/>
    <property type="project" value="RGD"/>
</dbReference>
<dbReference type="GO" id="GO:0032991">
    <property type="term" value="C:protein-containing complex"/>
    <property type="evidence" value="ECO:0000314"/>
    <property type="project" value="RGD"/>
</dbReference>
<dbReference type="GO" id="GO:0098685">
    <property type="term" value="C:Schaffer collateral - CA1 synapse"/>
    <property type="evidence" value="ECO:0000314"/>
    <property type="project" value="SynGO"/>
</dbReference>
<dbReference type="GO" id="GO:0045202">
    <property type="term" value="C:synapse"/>
    <property type="evidence" value="ECO:0000250"/>
    <property type="project" value="UniProtKB"/>
</dbReference>
<dbReference type="GO" id="GO:0001540">
    <property type="term" value="F:amyloid-beta binding"/>
    <property type="evidence" value="ECO:0000353"/>
    <property type="project" value="RGD"/>
</dbReference>
<dbReference type="GO" id="GO:0003682">
    <property type="term" value="F:chromatin binding"/>
    <property type="evidence" value="ECO:0000266"/>
    <property type="project" value="RGD"/>
</dbReference>
<dbReference type="GO" id="GO:0140297">
    <property type="term" value="F:DNA-binding transcription factor binding"/>
    <property type="evidence" value="ECO:0000353"/>
    <property type="project" value="UniProtKB"/>
</dbReference>
<dbReference type="GO" id="GO:0042393">
    <property type="term" value="F:histone binding"/>
    <property type="evidence" value="ECO:0000266"/>
    <property type="project" value="RGD"/>
</dbReference>
<dbReference type="GO" id="GO:0060090">
    <property type="term" value="F:molecular adaptor activity"/>
    <property type="evidence" value="ECO:0000266"/>
    <property type="project" value="RGD"/>
</dbReference>
<dbReference type="GO" id="GO:0070064">
    <property type="term" value="F:proline-rich region binding"/>
    <property type="evidence" value="ECO:0000266"/>
    <property type="project" value="RGD"/>
</dbReference>
<dbReference type="GO" id="GO:0044877">
    <property type="term" value="F:protein-containing complex binding"/>
    <property type="evidence" value="ECO:0000353"/>
    <property type="project" value="RGD"/>
</dbReference>
<dbReference type="GO" id="GO:0048156">
    <property type="term" value="F:tau protein binding"/>
    <property type="evidence" value="ECO:0000353"/>
    <property type="project" value="RGD"/>
</dbReference>
<dbReference type="GO" id="GO:0031625">
    <property type="term" value="F:ubiquitin protein ligase binding"/>
    <property type="evidence" value="ECO:0000266"/>
    <property type="project" value="RGD"/>
</dbReference>
<dbReference type="GO" id="GO:0006915">
    <property type="term" value="P:apoptotic process"/>
    <property type="evidence" value="ECO:0007669"/>
    <property type="project" value="UniProtKB-KW"/>
</dbReference>
<dbReference type="GO" id="GO:0007411">
    <property type="term" value="P:axon guidance"/>
    <property type="evidence" value="ECO:0000266"/>
    <property type="project" value="RGD"/>
</dbReference>
<dbReference type="GO" id="GO:0006974">
    <property type="term" value="P:DNA damage response"/>
    <property type="evidence" value="ECO:0000266"/>
    <property type="project" value="RGD"/>
</dbReference>
<dbReference type="GO" id="GO:0140861">
    <property type="term" value="P:DNA repair-dependent chromatin remodeling"/>
    <property type="evidence" value="ECO:0000315"/>
    <property type="project" value="UniProtKB"/>
</dbReference>
<dbReference type="GO" id="GO:0006302">
    <property type="term" value="P:double-strand break repair"/>
    <property type="evidence" value="ECO:0000266"/>
    <property type="project" value="RGD"/>
</dbReference>
<dbReference type="GO" id="GO:0030198">
    <property type="term" value="P:extracellular matrix organization"/>
    <property type="evidence" value="ECO:0000266"/>
    <property type="project" value="RGD"/>
</dbReference>
<dbReference type="GO" id="GO:1902807">
    <property type="term" value="P:negative regulation of cell cycle G1/S phase transition"/>
    <property type="evidence" value="ECO:0000314"/>
    <property type="project" value="UniProtKB"/>
</dbReference>
<dbReference type="GO" id="GO:0045665">
    <property type="term" value="P:negative regulation of neuron differentiation"/>
    <property type="evidence" value="ECO:0000266"/>
    <property type="project" value="RGD"/>
</dbReference>
<dbReference type="GO" id="GO:0000122">
    <property type="term" value="P:negative regulation of transcription by RNA polymerase II"/>
    <property type="evidence" value="ECO:0000314"/>
    <property type="project" value="UniProtKB"/>
</dbReference>
<dbReference type="GO" id="GO:0030182">
    <property type="term" value="P:neuron differentiation"/>
    <property type="evidence" value="ECO:0000266"/>
    <property type="project" value="RGD"/>
</dbReference>
<dbReference type="GO" id="GO:0001764">
    <property type="term" value="P:neuron migration"/>
    <property type="evidence" value="ECO:0000266"/>
    <property type="project" value="RGD"/>
</dbReference>
<dbReference type="GO" id="GO:0043065">
    <property type="term" value="P:positive regulation of apoptotic process"/>
    <property type="evidence" value="ECO:0000315"/>
    <property type="project" value="UniProtKB"/>
</dbReference>
<dbReference type="GO" id="GO:0045739">
    <property type="term" value="P:positive regulation of DNA repair"/>
    <property type="evidence" value="ECO:0000266"/>
    <property type="project" value="RGD"/>
</dbReference>
<dbReference type="GO" id="GO:0045893">
    <property type="term" value="P:positive regulation of DNA-templated transcription"/>
    <property type="evidence" value="ECO:0000314"/>
    <property type="project" value="UniProtKB"/>
</dbReference>
<dbReference type="GO" id="GO:0010976">
    <property type="term" value="P:positive regulation of neuron projection development"/>
    <property type="evidence" value="ECO:0000315"/>
    <property type="project" value="RGD"/>
</dbReference>
<dbReference type="GO" id="GO:0050714">
    <property type="term" value="P:positive regulation of protein secretion"/>
    <property type="evidence" value="ECO:0000315"/>
    <property type="project" value="RGD"/>
</dbReference>
<dbReference type="GO" id="GO:0045944">
    <property type="term" value="P:positive regulation of transcription by RNA polymerase II"/>
    <property type="evidence" value="ECO:0000314"/>
    <property type="project" value="RGD"/>
</dbReference>
<dbReference type="GO" id="GO:0006355">
    <property type="term" value="P:regulation of DNA-templated transcription"/>
    <property type="evidence" value="ECO:0000318"/>
    <property type="project" value="GO_Central"/>
</dbReference>
<dbReference type="GO" id="GO:0010039">
    <property type="term" value="P:response to iron ion"/>
    <property type="evidence" value="ECO:0000270"/>
    <property type="project" value="RGD"/>
</dbReference>
<dbReference type="GO" id="GO:0006939">
    <property type="term" value="P:smooth muscle contraction"/>
    <property type="evidence" value="ECO:0000250"/>
    <property type="project" value="UniProtKB"/>
</dbReference>
<dbReference type="GO" id="GO:0050808">
    <property type="term" value="P:synapse organization"/>
    <property type="evidence" value="ECO:0000266"/>
    <property type="project" value="RGD"/>
</dbReference>
<dbReference type="CDD" id="cd01272">
    <property type="entry name" value="PTB1_Fe65"/>
    <property type="match status" value="1"/>
</dbReference>
<dbReference type="CDD" id="cd01271">
    <property type="entry name" value="PTB2_Fe65"/>
    <property type="match status" value="1"/>
</dbReference>
<dbReference type="CDD" id="cd00201">
    <property type="entry name" value="WW"/>
    <property type="match status" value="1"/>
</dbReference>
<dbReference type="FunFam" id="2.30.29.30:FF:000019">
    <property type="entry name" value="Amyloid beta (A4) precursor protein-binding, family B, member 1 (Fe65)"/>
    <property type="match status" value="1"/>
</dbReference>
<dbReference type="FunFam" id="2.20.70.10:FF:000003">
    <property type="entry name" value="amyloid beta A4 precursor protein-binding family B member 2"/>
    <property type="match status" value="1"/>
</dbReference>
<dbReference type="FunFam" id="2.30.29.30:FF:000034">
    <property type="entry name" value="amyloid beta A4 precursor protein-binding family B member 2"/>
    <property type="match status" value="1"/>
</dbReference>
<dbReference type="Gene3D" id="2.20.70.10">
    <property type="match status" value="1"/>
</dbReference>
<dbReference type="Gene3D" id="2.30.29.30">
    <property type="entry name" value="Pleckstrin-homology domain (PH domain)/Phosphotyrosine-binding domain (PTB)"/>
    <property type="match status" value="2"/>
</dbReference>
<dbReference type="InterPro" id="IPR039576">
    <property type="entry name" value="APBB1/2/3"/>
</dbReference>
<dbReference type="InterPro" id="IPR011993">
    <property type="entry name" value="PH-like_dom_sf"/>
</dbReference>
<dbReference type="InterPro" id="IPR006020">
    <property type="entry name" value="PTB/PI_dom"/>
</dbReference>
<dbReference type="InterPro" id="IPR001202">
    <property type="entry name" value="WW_dom"/>
</dbReference>
<dbReference type="InterPro" id="IPR036020">
    <property type="entry name" value="WW_dom_sf"/>
</dbReference>
<dbReference type="PANTHER" id="PTHR14058">
    <property type="entry name" value="AMYLOID BETA A4 PRECURSOR PROTEIN-BINDING FAMILY B"/>
    <property type="match status" value="1"/>
</dbReference>
<dbReference type="PANTHER" id="PTHR14058:SF5">
    <property type="entry name" value="AMYLOID BETA PRECURSOR PROTEIN BINDING FAMILY B MEMBER 1"/>
    <property type="match status" value="1"/>
</dbReference>
<dbReference type="Pfam" id="PF00640">
    <property type="entry name" value="PID"/>
    <property type="match status" value="2"/>
</dbReference>
<dbReference type="Pfam" id="PF00397">
    <property type="entry name" value="WW"/>
    <property type="match status" value="1"/>
</dbReference>
<dbReference type="SMART" id="SM00462">
    <property type="entry name" value="PTB"/>
    <property type="match status" value="2"/>
</dbReference>
<dbReference type="SMART" id="SM00456">
    <property type="entry name" value="WW"/>
    <property type="match status" value="1"/>
</dbReference>
<dbReference type="SUPFAM" id="SSF50729">
    <property type="entry name" value="PH domain-like"/>
    <property type="match status" value="2"/>
</dbReference>
<dbReference type="SUPFAM" id="SSF51045">
    <property type="entry name" value="WW domain"/>
    <property type="match status" value="1"/>
</dbReference>
<dbReference type="PROSITE" id="PS01179">
    <property type="entry name" value="PID"/>
    <property type="match status" value="2"/>
</dbReference>
<dbReference type="PROSITE" id="PS01159">
    <property type="entry name" value="WW_DOMAIN_1"/>
    <property type="match status" value="1"/>
</dbReference>
<dbReference type="PROSITE" id="PS50020">
    <property type="entry name" value="WW_DOMAIN_2"/>
    <property type="match status" value="1"/>
</dbReference>
<keyword id="KW-0007">Acetylation</keyword>
<keyword id="KW-0010">Activator</keyword>
<keyword id="KW-0025">Alternative splicing</keyword>
<keyword id="KW-0053">Apoptosis</keyword>
<keyword id="KW-1003">Cell membrane</keyword>
<keyword id="KW-0966">Cell projection</keyword>
<keyword id="KW-0156">Chromatin regulator</keyword>
<keyword id="KW-0963">Cytoplasm</keyword>
<keyword id="KW-0227">DNA damage</keyword>
<keyword id="KW-0472">Membrane</keyword>
<keyword id="KW-0539">Nucleus</keyword>
<keyword id="KW-0597">Phosphoprotein</keyword>
<keyword id="KW-1185">Reference proteome</keyword>
<keyword id="KW-0677">Repeat</keyword>
<keyword id="KW-0678">Repressor</keyword>
<keyword id="KW-0804">Transcription</keyword>
<keyword id="KW-0805">Transcription regulation</keyword>
<keyword id="KW-0832">Ubl conjugation</keyword>
<feature type="chain" id="PRO_0000076051" description="Amyloid beta precursor protein binding family B member 1">
    <location>
        <begin position="1"/>
        <end position="711"/>
    </location>
</feature>
<feature type="domain" description="WW" evidence="4">
    <location>
        <begin position="254"/>
        <end position="286"/>
    </location>
</feature>
<feature type="domain" description="PID 1" evidence="3">
    <location>
        <begin position="365"/>
        <end position="533"/>
    </location>
</feature>
<feature type="domain" description="PID 2" evidence="3">
    <location>
        <begin position="538"/>
        <end position="700"/>
    </location>
</feature>
<feature type="region of interest" description="Disordered" evidence="5">
    <location>
        <begin position="140"/>
        <end position="257"/>
    </location>
</feature>
<feature type="region of interest" description="Disordered" evidence="5">
    <location>
        <begin position="277"/>
        <end position="300"/>
    </location>
</feature>
<feature type="region of interest" description="Disordered" evidence="5">
    <location>
        <begin position="321"/>
        <end position="364"/>
    </location>
</feature>
<feature type="compositionally biased region" description="Acidic residues" evidence="5">
    <location>
        <begin position="156"/>
        <end position="174"/>
    </location>
</feature>
<feature type="compositionally biased region" description="Polar residues" evidence="5">
    <location>
        <begin position="224"/>
        <end position="235"/>
    </location>
</feature>
<feature type="compositionally biased region" description="Polar residues" evidence="5">
    <location>
        <begin position="288"/>
        <end position="300"/>
    </location>
</feature>
<feature type="modified residue" description="Phosphoserine" evidence="2">
    <location>
        <position position="135"/>
    </location>
</feature>
<feature type="modified residue" description="N6-acetyllysine" evidence="1">
    <location>
        <position position="205"/>
    </location>
</feature>
<feature type="modified residue" description="Phosphoserine; by PKC" evidence="1">
    <location>
        <position position="460"/>
    </location>
</feature>
<feature type="modified residue" description="Phosphoserine" evidence="2">
    <location>
        <position position="518"/>
    </location>
</feature>
<feature type="modified residue" description="Phosphotyrosine; by ABL1" evidence="1">
    <location>
        <position position="548"/>
    </location>
</feature>
<feature type="modified residue" description="Phosphoserine; by SGK1" evidence="6">
    <location>
        <position position="611"/>
    </location>
</feature>
<feature type="modified residue" description="N6-acetyllysine" evidence="1">
    <location>
        <position position="702"/>
    </location>
</feature>
<feature type="splice variant" id="VSP_006798" description="In isoform 2." evidence="11">
    <location>
        <begin position="463"/>
        <end position="464"/>
    </location>
</feature>
<feature type="mutagenesis site" description="Abolishes interaction with APP and impairs the function in DNA repair." evidence="7">
    <original>C</original>
    <variation>F</variation>
    <location>
        <position position="655"/>
    </location>
</feature>
<feature type="sequence conflict" description="In Ref. 2." evidence="13" ref="2">
    <original>L</original>
    <variation>K</variation>
    <location>
        <position position="137"/>
    </location>
</feature>
<feature type="sequence conflict" description="In Ref. 2; CAA42999." evidence="13" ref="2">
    <original>EEKAA</original>
    <variation>GRRQR</variation>
    <location>
        <begin position="150"/>
        <end position="154"/>
    </location>
</feature>
<feature type="sequence conflict" description="In Ref. 2; CAA42999." evidence="13" ref="2">
    <original>E</original>
    <variation>EEEDEEEE</variation>
    <location>
        <position position="172"/>
    </location>
</feature>
<reference key="1">
    <citation type="submission" date="2001-01" db="EMBL/GenBank/DDBJ databases">
        <title>Nuclear signaling of APP cytoplasmic tail.</title>
        <authorList>
            <person name="Cao X."/>
            <person name="Suedhof T.C."/>
        </authorList>
    </citation>
    <scope>NUCLEOTIDE SEQUENCE [MRNA] (ISOFORM 1)</scope>
</reference>
<reference key="2">
    <citation type="journal article" date="1991" name="Nucleic Acids Res.">
        <title>A rat brain mRNA encoding a transcriptional activator homologous to the DNA binding domain of retroviral integrases.</title>
        <authorList>
            <person name="Duilio A."/>
            <person name="Zambrano N."/>
            <person name="Mogavero A.R."/>
            <person name="Ammendola R."/>
            <person name="Cimino F."/>
            <person name="Russo T."/>
        </authorList>
    </citation>
    <scope>NUCLEOTIDE SEQUENCE [MRNA] OF 121-711 (ISOFORM 2)</scope>
    <source>
        <tissue>Brain</tissue>
    </source>
</reference>
<reference key="3">
    <citation type="journal article" date="1994" name="Nucleic Acids Res.">
        <title>The DNA sequence encompassing the transcription start site of a TATA-less promoter contains enough information to drive neuron-specific transcription.</title>
        <authorList>
            <person name="Faraonio R."/>
            <person name="Minopoli G."/>
            <person name="Porcellini A."/>
            <person name="Costanzo F."/>
            <person name="Cimino F."/>
            <person name="Russo T."/>
        </authorList>
    </citation>
    <scope>NUCLEOTIDE SEQUENCE [MRNA] OF 243-530</scope>
    <scope>TISSUE SPECIFICITY</scope>
    <source>
        <tissue>Brain</tissue>
    </source>
</reference>
<reference key="4">
    <citation type="journal article" date="2008" name="BMB Rep.">
        <title>Regulation Fe65 localization to the nucleus by SGK1 phosphorylation of its Ser566 residue.</title>
        <authorList>
            <person name="Lee E.J."/>
            <person name="Chun J."/>
            <person name="Hyun S."/>
            <person name="Ahn H.R."/>
            <person name="Jeong J.M."/>
            <person name="Hong S.K."/>
            <person name="Hong J.T."/>
            <person name="Chang I.K."/>
            <person name="Jeon H.Y."/>
            <person name="Han Y.S."/>
            <person name="Auh C.K."/>
            <person name="Park J.I."/>
            <person name="Kang S.S."/>
        </authorList>
    </citation>
    <scope>PHOSPHORYLATION AT SER-611</scope>
    <scope>SUBCELLULAR LOCATION</scope>
</reference>
<reference key="5">
    <citation type="journal article" date="2009" name="PLoS ONE">
        <title>FE65 binds Teashirt, inhibiting expression of the primate-specific caspase-4.</title>
        <authorList>
            <person name="Kajiwara Y."/>
            <person name="Akram A."/>
            <person name="Katsel P."/>
            <person name="Haroutunian V."/>
            <person name="Schmeidler J."/>
            <person name="Beecham G."/>
            <person name="Haines J.L."/>
            <person name="Pericak-Vance M.A."/>
            <person name="Buxbaum J.D."/>
        </authorList>
    </citation>
    <scope>INTERACTION WITH TSHZ3</scope>
    <scope>SUBCELLULAR LOCATION</scope>
</reference>
<reference key="6">
    <citation type="journal article" date="2009" name="Proc. Natl. Acad. Sci. U.S.A.">
        <title>Fe65 is required for Tip60-directed histone H4 acetylation at DNA strand breaks.</title>
        <authorList>
            <person name="Stante M."/>
            <person name="Minopoli G."/>
            <person name="Passaro F."/>
            <person name="Raia M."/>
            <person name="Vecchio L.D."/>
            <person name="Russo T."/>
        </authorList>
    </citation>
    <scope>FUNCTION</scope>
    <scope>INTERACTION WITH KAT5</scope>
    <scope>MUTAGENESIS OF CYS-655</scope>
</reference>
<evidence type="ECO:0000250" key="1">
    <source>
        <dbReference type="UniProtKB" id="O00213"/>
    </source>
</evidence>
<evidence type="ECO:0000250" key="2">
    <source>
        <dbReference type="UniProtKB" id="Q9QXJ1"/>
    </source>
</evidence>
<evidence type="ECO:0000255" key="3">
    <source>
        <dbReference type="PROSITE-ProRule" id="PRU00148"/>
    </source>
</evidence>
<evidence type="ECO:0000255" key="4">
    <source>
        <dbReference type="PROSITE-ProRule" id="PRU00224"/>
    </source>
</evidence>
<evidence type="ECO:0000256" key="5">
    <source>
        <dbReference type="SAM" id="MobiDB-lite"/>
    </source>
</evidence>
<evidence type="ECO:0000269" key="6">
    <source>
    </source>
</evidence>
<evidence type="ECO:0000269" key="7">
    <source>
    </source>
</evidence>
<evidence type="ECO:0000269" key="8">
    <source>
    </source>
</evidence>
<evidence type="ECO:0000269" key="9">
    <source>
    </source>
</evidence>
<evidence type="ECO:0000303" key="10">
    <source>
    </source>
</evidence>
<evidence type="ECO:0000303" key="11">
    <source>
    </source>
</evidence>
<evidence type="ECO:0000303" key="12">
    <source>
    </source>
</evidence>
<evidence type="ECO:0000305" key="13"/>
<evidence type="ECO:0000312" key="14">
    <source>
        <dbReference type="RGD" id="2122"/>
    </source>
</evidence>
<sequence>MSVPSSLSQSAINANSHGGPALSFPFPLHAAHNQLLNAKLQATAVVPKDLRSAMGEGSVPEPGPANAKWLKEGQNQLRRAATAHRDQNRNVTLTLAEEASQEAETAPLGPKGLMHLYSELELSAHNAANRGLHGSALIINTQGLGPDEGEEKAAGEVEEEDEDEEEEDEEEEDLSSPQGLPEPLENVEVPSGPQVLTDGPREHSKSASLLFGMRNSAASDEDSSWATLSQGSPSYGSPEDTDSFWNPNAFETDSDLPAGWMRVQDTSGTYYWHIPTGTTQWEPPGRASPSQGNSPQEESQLTWTGFAHQEGFEEGEFWKDEPSEEAPMELGLKDPEEGTLPFSAQSLSPEPVPQEEENLPQRNANPGIKCFAVRSLGWVEMTEEELAPGRSSVAVNNCIRQLSYHKNNLHDPMSGGWGEGKDLLLQLEDETLKLVEPQNQTLLHAQPIVSIRVWGVGRDSGRERDFAYVARDKLTQMLKCHVFRCEAPAKNIATSLHEICSKIMSERRNARCLVNGLSLDHSKLVDVPFQVEFPAPKNELVQKFQVYYLGNVPVAKPVGVDVINGALESVLSSSSREQWTPSHVSVAPATLTILHQQTEAVLGECRVRFLSFLAVGRDVHTFAFIMAAGPASFCCHMFWCEPNAASLSEAVQAACMLRYQKCLDARSQTSTSCLPAPPAESVARRVGWTVRRGVQSLWGSLKPKRLGSQTP</sequence>
<accession>P46933</accession>
<accession>Q99MK3</accession>
<name>APBB1_RAT</name>
<comment type="function">
    <text evidence="1 2 7">Transcription coregulator that can have both coactivator and corepressor functions. Adapter protein that forms a transcriptionally active complex with the gamma-secretase-derived amyloid precursor protein (APP) intracellular domain. Plays a central role in the response to DNA damage by translocating to the nucleus and inducing apoptosis. May act by specifically recognizing and binding histone H2AX phosphorylated on 'Tyr-142' (H2AXY142ph) at double-strand breaks (DSBs), recruiting other pro-apoptosis factors such as MAPK8/JNK1. Required for histone H4 acetylation at double-strand breaks (DSBs) (By similarity). Its ability to specifically bind modified histones and chromatin modifying enzymes such as KAT5/TIP60, probably explains its transcription activation activity (PubMed:19282473). Functions in association with TSHZ3, SET and HDAC factors as a transcriptional repressor, that inhibits the expression of CASP4. Associates with chromatin in a region surrounding the CASP4 transcriptional start site(s) (By similarity). Involved in hippocampal neurite branching and neuromuscular junction formation, as a result plays a role in spatial memory functioning. Plays a role in the maintenance of lens transparency. May play a role in muscle cell strength (By similarity). Acts as a molecular adapter that functions in neurite outgrowth by activating the RAC1-ARF6 axis upon insulin treatment (By similarity).</text>
</comment>
<comment type="subunit">
    <text evidence="1 2 7 8">Component of a complex, at least composed of APBB1, RASD1/DEXRAS1 and APP (By similarity). Interacts (via PID domain 2) with APP (with the intracellular domain of the amyloid-beta precursor protein) (By similarity). Interacts (via PID domain 2) with RASD1/DEXRAS1; impairs the transcription activation activity (By similarity). Interacts (via PID domain 1) with KAT5/TIP60 (PubMed:19282473). Interacts (via the WW domain) with the proline-rich region of APBB1IP (By similarity). Interacts with TSHZ1 and TSHZ2 (By similarity). Interacts (via the WW domain) with histone H2AX (when phosphorylated on 'Tyr-142') and the proline-rich region of ENAH (By similarity). Interacts with MAPK8 (By similarity). Interacts (via PID domain 1) with TSHZ3 (via homeobox domain) (PubMed:19343227). Interacts with SET (By similarity). Found in a trimeric complex with HDAC1 and TSHZ3; the interaction between HDAC1 and APBB1 is mediated by TSHZ3 (By similarity). Interacts (via WWW domain) with NEK6 (By similarity). Interacts (via WWW domain) with ABL1. Interacts with RNF157 (By similarity). Interacts with ARF6 (By similarity).</text>
</comment>
<comment type="interaction">
    <interactant intactId="EBI-15759525">
        <id>P46933-1</id>
    </interactant>
    <interactant intactId="EBI-494830">
        <id>P16104</id>
        <label>H2AX</label>
    </interactant>
    <organismsDiffer>true</organismsDiffer>
    <experiments>2</experiments>
</comment>
<comment type="subcellular location">
    <subcellularLocation>
        <location evidence="1">Cell membrane</location>
    </subcellularLocation>
    <subcellularLocation>
        <location evidence="1">Cytoplasm</location>
    </subcellularLocation>
    <subcellularLocation>
        <location evidence="6">Nucleus</location>
    </subcellularLocation>
    <subcellularLocation>
        <location evidence="8">Cell projection</location>
        <location evidence="8">Growth cone</location>
    </subcellularLocation>
    <subcellularLocation>
        <location evidence="1">Nucleus speckle</location>
    </subcellularLocation>
    <text evidence="1 6 8">Colocalizes with TSHZ3 in axonal growth cone (PubMed:19343227). Colocalizes with TSHZ3 in the nucleus. In normal conditions, it mainly localizes to the cytoplasm, while a small fraction is tethered to the cell membrane via its interaction with APP. Following exposure to DNA damaging agents, it is released from cell membrane and translocates to the nucleus. Nuclear translocation is under the regulation of APP. Colocalizes with NEK6 at the nuclear speckles (By similarity). Phosphorylation at Ser-610 by SGK1 promotes its localization to the nucleus (PubMed:18304449).</text>
</comment>
<comment type="alternative products">
    <event type="alternative splicing"/>
    <isoform>
        <id>P46933-1</id>
        <name>1</name>
        <name evidence="12">Long</name>
        <sequence type="displayed"/>
    </isoform>
    <isoform>
        <id>P46933-2</id>
        <name>2</name>
        <name evidence="12">Short</name>
        <sequence type="described" ref="VSP_006798"/>
    </isoform>
</comment>
<comment type="tissue specificity">
    <text evidence="9">Brain, not in liver, very low in other tissues. The long (neuron-specific) form is expressed only in brain.</text>
</comment>
<comment type="PTM">
    <text evidence="1">Polyubiquitination by RNF157 leads to degradation by the proteasome.</text>
</comment>
<comment type="PTM">
    <text evidence="1 6">Phosphorylation at Ser-611 by SGK1 promotes its localization to the nucleus (PubMed:18304449). Phosphorylated following nuclear translocation. Phosphorylation at Tyr-547 by ABL1 enhances transcriptional activation activity and reduces the affinity for RASD1/DEXRAS1 (By similarity). Phosphorylated at Ser-460 by PKC upon insulin activation (By similarity).</text>
</comment>
<comment type="PTM">
    <text evidence="1">Acetylation at Lys-205 and Lys-702 by KAT5 promotes its transcription activator activity.</text>
</comment>
<comment type="sequence caution" evidence="13">
    <conflict type="frameshift">
        <sequence resource="EMBL-CDS" id="CAA42999"/>
    </conflict>
</comment>
<proteinExistence type="evidence at protein level"/>
<gene>
    <name evidence="14" type="primary">Apbb1</name>
    <name evidence="10" type="synonym">Fe65</name>
    <name evidence="2" type="synonym">Rir</name>
</gene>
<protein>
    <recommendedName>
        <fullName evidence="1">Amyloid beta precursor protein binding family B member 1</fullName>
    </recommendedName>
    <alternativeName>
        <fullName evidence="14">Amyloid-beta A4 precursor protein-binding family B member 1</fullName>
    </alternativeName>
    <alternativeName>
        <fullName evidence="2">Protein Fe65</fullName>
    </alternativeName>
</protein>
<organism>
    <name type="scientific">Rattus norvegicus</name>
    <name type="common">Rat</name>
    <dbReference type="NCBI Taxonomy" id="10116"/>
    <lineage>
        <taxon>Eukaryota</taxon>
        <taxon>Metazoa</taxon>
        <taxon>Chordata</taxon>
        <taxon>Craniata</taxon>
        <taxon>Vertebrata</taxon>
        <taxon>Euteleostomi</taxon>
        <taxon>Mammalia</taxon>
        <taxon>Eutheria</taxon>
        <taxon>Euarchontoglires</taxon>
        <taxon>Glires</taxon>
        <taxon>Rodentia</taxon>
        <taxon>Myomorpha</taxon>
        <taxon>Muroidea</taxon>
        <taxon>Muridae</taxon>
        <taxon>Murinae</taxon>
        <taxon>Rattus</taxon>
    </lineage>
</organism>